<gene>
    <name type="primary">Tnrc6a</name>
    <name type="synonym">Kiaa1460</name>
</gene>
<name>TNR6A_MOUSE</name>
<feature type="chain" id="PRO_0000373980" description="Trinucleotide repeat-containing gene 6A protein">
    <location>
        <begin position="1"/>
        <end position="1896"/>
    </location>
</feature>
<feature type="domain" description="RRM">
    <location>
        <begin position="1716"/>
        <end position="1788"/>
    </location>
</feature>
<feature type="region of interest" description="Interaction with argonaute family proteins" evidence="1">
    <location>
        <begin position="1"/>
        <end position="917"/>
    </location>
</feature>
<feature type="region of interest" description="Disordered" evidence="3">
    <location>
        <begin position="1"/>
        <end position="137"/>
    </location>
</feature>
<feature type="region of interest" description="Disordered" evidence="3">
    <location>
        <begin position="159"/>
        <end position="209"/>
    </location>
</feature>
<feature type="region of interest" description="Disordered" evidence="3">
    <location>
        <begin position="222"/>
        <end position="250"/>
    </location>
</feature>
<feature type="region of interest" description="Sufficient for interaction with AGO1, AGO3 and AGO4" evidence="1">
    <location>
        <begin position="239"/>
        <end position="488"/>
    </location>
</feature>
<feature type="region of interest" description="Sufficient for interaction with AGO2" evidence="1">
    <location>
        <begin position="255"/>
        <end position="331"/>
    </location>
</feature>
<feature type="region of interest" description="Disordered" evidence="3">
    <location>
        <begin position="257"/>
        <end position="276"/>
    </location>
</feature>
<feature type="region of interest" description="Sufficient for interaction with AGO2" evidence="1">
    <location>
        <begin position="303"/>
        <end position="384"/>
    </location>
</feature>
<feature type="region of interest" description="Sufficient for interaction with AGO2" evidence="1">
    <location>
        <begin position="325"/>
        <end position="424"/>
    </location>
</feature>
<feature type="region of interest" description="Sufficient for interaction with AGO2" evidence="1">
    <location>
        <begin position="394"/>
        <end position="480"/>
    </location>
</feature>
<feature type="region of interest" description="Disordered" evidence="3">
    <location>
        <begin position="396"/>
        <end position="461"/>
    </location>
</feature>
<feature type="region of interest" description="Sufficient for interaction with AGO2" evidence="1">
    <location>
        <begin position="487"/>
        <end position="736"/>
    </location>
</feature>
<feature type="region of interest" description="Disordered" evidence="3">
    <location>
        <begin position="548"/>
        <end position="683"/>
    </location>
</feature>
<feature type="region of interest" description="Sufficient for interaction with AGO1 and AGO4" evidence="1">
    <location>
        <begin position="551"/>
        <end position="1279"/>
    </location>
</feature>
<feature type="region of interest" description="Disordered" evidence="3">
    <location>
        <begin position="703"/>
        <end position="998"/>
    </location>
</feature>
<feature type="region of interest" description="Disordered" evidence="3">
    <location>
        <begin position="1011"/>
        <end position="1126"/>
    </location>
</feature>
<feature type="region of interest" description="Sufficient for interaction with AGO2" evidence="1">
    <location>
        <begin position="1059"/>
        <end position="1129"/>
    </location>
</feature>
<feature type="region of interest" description="Disordered" evidence="3">
    <location>
        <begin position="1143"/>
        <end position="1182"/>
    </location>
</feature>
<feature type="region of interest" description="Disordered" evidence="3">
    <location>
        <begin position="1234"/>
        <end position="1256"/>
    </location>
</feature>
<feature type="region of interest" description="Disordered" evidence="3">
    <location>
        <begin position="1273"/>
        <end position="1306"/>
    </location>
</feature>
<feature type="region of interest" description="Disordered" evidence="3">
    <location>
        <begin position="1360"/>
        <end position="1395"/>
    </location>
</feature>
<feature type="region of interest" description="Disordered" evidence="3">
    <location>
        <begin position="1512"/>
        <end position="1570"/>
    </location>
</feature>
<feature type="region of interest" description="Sufficient for interaction with AGO2" evidence="1">
    <location>
        <begin position="1605"/>
        <end position="1896"/>
    </location>
</feature>
<feature type="region of interest" description="Disordered" evidence="3">
    <location>
        <begin position="1659"/>
        <end position="1685"/>
    </location>
</feature>
<feature type="compositionally biased region" description="Basic and acidic residues" evidence="3">
    <location>
        <begin position="1"/>
        <end position="21"/>
    </location>
</feature>
<feature type="compositionally biased region" description="Basic and acidic residues" evidence="3">
    <location>
        <begin position="39"/>
        <end position="57"/>
    </location>
</feature>
<feature type="compositionally biased region" description="Low complexity" evidence="3">
    <location>
        <begin position="69"/>
        <end position="93"/>
    </location>
</feature>
<feature type="compositionally biased region" description="Low complexity" evidence="3">
    <location>
        <begin position="101"/>
        <end position="113"/>
    </location>
</feature>
<feature type="compositionally biased region" description="Basic residues" evidence="3">
    <location>
        <begin position="125"/>
        <end position="137"/>
    </location>
</feature>
<feature type="compositionally biased region" description="Polar residues" evidence="3">
    <location>
        <begin position="396"/>
        <end position="410"/>
    </location>
</feature>
<feature type="compositionally biased region" description="Polar residues" evidence="3">
    <location>
        <begin position="417"/>
        <end position="429"/>
    </location>
</feature>
<feature type="compositionally biased region" description="Low complexity" evidence="3">
    <location>
        <begin position="430"/>
        <end position="443"/>
    </location>
</feature>
<feature type="compositionally biased region" description="Polar residues" evidence="3">
    <location>
        <begin position="444"/>
        <end position="461"/>
    </location>
</feature>
<feature type="compositionally biased region" description="Gly residues" evidence="3">
    <location>
        <begin position="573"/>
        <end position="584"/>
    </location>
</feature>
<feature type="compositionally biased region" description="Polar residues" evidence="3">
    <location>
        <begin position="591"/>
        <end position="617"/>
    </location>
</feature>
<feature type="compositionally biased region" description="Polar residues" evidence="3">
    <location>
        <begin position="635"/>
        <end position="647"/>
    </location>
</feature>
<feature type="compositionally biased region" description="Basic and acidic residues" evidence="3">
    <location>
        <begin position="665"/>
        <end position="683"/>
    </location>
</feature>
<feature type="compositionally biased region" description="Polar residues" evidence="3">
    <location>
        <begin position="703"/>
        <end position="722"/>
    </location>
</feature>
<feature type="compositionally biased region" description="Basic and acidic residues" evidence="3">
    <location>
        <begin position="723"/>
        <end position="733"/>
    </location>
</feature>
<feature type="compositionally biased region" description="Polar residues" evidence="3">
    <location>
        <begin position="738"/>
        <end position="766"/>
    </location>
</feature>
<feature type="compositionally biased region" description="Low complexity" evidence="3">
    <location>
        <begin position="858"/>
        <end position="871"/>
    </location>
</feature>
<feature type="compositionally biased region" description="Polar residues" evidence="3">
    <location>
        <begin position="876"/>
        <end position="906"/>
    </location>
</feature>
<feature type="compositionally biased region" description="Polar residues" evidence="3">
    <location>
        <begin position="924"/>
        <end position="937"/>
    </location>
</feature>
<feature type="compositionally biased region" description="Polar residues" evidence="3">
    <location>
        <begin position="1033"/>
        <end position="1042"/>
    </location>
</feature>
<feature type="compositionally biased region" description="Polar residues" evidence="3">
    <location>
        <begin position="1054"/>
        <end position="1064"/>
    </location>
</feature>
<feature type="compositionally biased region" description="Polar residues" evidence="3">
    <location>
        <begin position="1082"/>
        <end position="1105"/>
    </location>
</feature>
<feature type="compositionally biased region" description="Low complexity" evidence="3">
    <location>
        <begin position="1143"/>
        <end position="1163"/>
    </location>
</feature>
<feature type="compositionally biased region" description="Low complexity" evidence="3">
    <location>
        <begin position="1284"/>
        <end position="1296"/>
    </location>
</feature>
<feature type="compositionally biased region" description="Low complexity" evidence="3">
    <location>
        <begin position="1360"/>
        <end position="1376"/>
    </location>
</feature>
<feature type="modified residue" description="Phosphoserine" evidence="2">
    <location>
        <position position="724"/>
    </location>
</feature>
<feature type="modified residue" description="Phosphoserine" evidence="2">
    <location>
        <position position="863"/>
    </location>
</feature>
<feature type="modified residue" description="Phosphoserine" evidence="2">
    <location>
        <position position="976"/>
    </location>
</feature>
<feature type="modified residue" description="Phosphoserine" evidence="2">
    <location>
        <position position="1197"/>
    </location>
</feature>
<feature type="modified residue" description="Phosphoserine" evidence="2">
    <location>
        <position position="1255"/>
    </location>
</feature>
<feature type="modified residue" description="Phosphothreonine" evidence="2">
    <location>
        <position position="1406"/>
    </location>
</feature>
<feature type="modified residue" description="Phosphoserine" evidence="2">
    <location>
        <position position="1520"/>
    </location>
</feature>
<feature type="modified residue" description="Phosphoserine" evidence="2">
    <location>
        <position position="1804"/>
    </location>
</feature>
<feature type="modified residue" description="Phosphoserine" evidence="2">
    <location>
        <position position="1825"/>
    </location>
</feature>
<feature type="sequence conflict" description="In Ref. 1; BAE27849." ref="1">
    <original>G</original>
    <variation>E</variation>
    <location>
        <position position="587"/>
    </location>
</feature>
<protein>
    <recommendedName>
        <fullName>Trinucleotide repeat-containing gene 6A protein</fullName>
    </recommendedName>
</protein>
<sequence length="1896" mass="203150">MRELEAKATKDVERNLSRDLVQEEEQLMEEKKKKKDDKKKKEAAQKKATEQKIKVPEQIKPSVSQPQPANSDNGTSTATSTNNNAKRATASNQQPPPPQQQQPQQEQQQQQPQALPRYPREVPPRFRHQEHKQLLKRGQHFPVIAANLGSAVKVLNSQSESSAVTNQQPQNNGEVQNSKSQSDINHNTSGSHYENCQRGPVSSTSDCSTSCKNAVNDLLEKEAWPSAPGSDPELAPECIDADSASNSESERNITVMASGNTGGEKDGLRNSTGLGSQSKFVVGSSSNNVGHGSSTGPWGFPHGALISTCQVSVDAPESKPESSNNRMNAWGTVSSSSNGGLNPSTLNSASNHGAWPVLENNGLALKGPVGSGSSGINIQCSTIGQMPNNQNINSKVSGSSTHGTWGSLQETCEPEVSGTQKVSFSGQPQNITTETTGPNNTTNFMTSSLPNSGSVQNNELPTSNPGAWRVSTMNHPQIQAPSVMNGTSLSHLSNGESKTGGSYGTTWGAYGSNYSGDKCAGPNGQANGDTVNATLMQPGINGPMGTNFQVNTNKGGGVWEPGTVNSQSSPWGSGNGANSGGSRRGWGSPAQNTGTGLSSVEWNKLPSNQHSNDSANGNGKKLTNGWKSTEEDDQGSATSQTNEQNSVWAKAGGTVESDGSAESTGRLEEKVTGESQSRDRRKIDQHTLLQSIVNRTDLDPRVLSNSGWGQTPIKQNTAWDTETSPRGERKTDNGTEAWGSSATQTFNSGACTDKTSPNSNDTSSVSGWGDPKPTLRWGDSKGSNCQGGWEDDSAATGMIKSNQWGGCKEDKSTWNDSQKSKQGWGDGQKSSQGWSISAGDNWGESSRSNHWGEANKKSSSGGSDSDRSISGWNELGKTSSFTWGNNINPNNSSGWDESSKPNSSQGWGDPPKCNQSLGWGDSSKPVSSPDWNKQQDIVGSWGIPPATSKPPGTGWLGGPIPAPAKEEEPTGWEEPSPESIRRKMEIDDGTSAWGDPSKYNYKNVNMWNKNIPEASGRSDQQAQMHRLLPAASAVSSKETSSGSGWGEPWAEPSTPATTVDNGTSAWGKPIDSGPSWGEPITAASNASTWGSSSVGPQSLSKSGPKSMQDGWCGDDMPLPGSRPTGWEEEEDVEIGMWNSNSSQELNSSLNWPPYTKKMSSKGLSGKKRRRERGMMKGGNKQEDAWINPFVKQFSNISFSRDSPEENVQSNKMDLSGGMLQDKRMEIDKHSLNIGDYNRTVGKGPGSRPQISKESSMERNPYFDKNGNPNMFGVGNTAAQPRGMQQPPAQPLSSSQPNLRAQVPPPLLSPQVPVSLLKYAPNNGGLNPLFGPQQVAMLNQLSQLNQLSQISQLQRLLAQQQRAQSQRSAPSANRQQQDQQGRPLSVQQQMMQQSRQLDPSLLVKQQTPPSQQPLHQPAMKSFLDNVMPHTTPELQKGPSPVNAFSNFPIGLNSNLNVNMDMNSIKEPQSRLRKWTTVDSMSVNTSLDQNSSKHGAISSGFRLEESPFVPYDFMNSSTSPASPPGSIGDGWPRAKSPNGSSSVNWPPEFRPGEPWKGYPNIDPETDPYVTPGSVINSLSINTVREVDHLRDRNSGSSSSLNTTLPSTSAWSSIRASNYNVPLSSTAQSTSARNSDSKLTWSPGSVTNTSLAHELWKVPLPPKNITAPSRPPPGLTGQKPPLSTWDNSPLRVGGGWGNSDARYTPGSSWGESSSGRITNWLVLKNLTPQIDGSTLRTLCMQHGPLITFHLNLPHGNALVRYSSKEEVVKAQKSLHMCVLGNTTILAEFASEEEISRFFAQSQSLTPSPGWQSLGSSQSRLGSLDCSHSFSSRTDVNHWNGAGLSGANCGDLHGTSLWGTPHYSTSLWGPPSSDPRGISSPSPINAFLSVDHLGGGGESM</sequence>
<organism>
    <name type="scientific">Mus musculus</name>
    <name type="common">Mouse</name>
    <dbReference type="NCBI Taxonomy" id="10090"/>
    <lineage>
        <taxon>Eukaryota</taxon>
        <taxon>Metazoa</taxon>
        <taxon>Chordata</taxon>
        <taxon>Craniata</taxon>
        <taxon>Vertebrata</taxon>
        <taxon>Euteleostomi</taxon>
        <taxon>Mammalia</taxon>
        <taxon>Eutheria</taxon>
        <taxon>Euarchontoglires</taxon>
        <taxon>Glires</taxon>
        <taxon>Rodentia</taxon>
        <taxon>Myomorpha</taxon>
        <taxon>Muroidea</taxon>
        <taxon>Muridae</taxon>
        <taxon>Murinae</taxon>
        <taxon>Mus</taxon>
        <taxon>Mus</taxon>
    </lineage>
</organism>
<comment type="function">
    <text evidence="2 4">Plays a role in RNA-mediated gene silencing by both micro-RNAs (miRNAs) and short interfering RNAs (siRNAs) (PubMed:22187428). Required for miRNA-dependent repression of translation and for siRNA-dependent endonucleolytic cleavage of complementary mRNAs by argonaute family proteins (PubMed:22187428). As a scaffolding protein, associates with argonaute proteins bound to partially complementary mRNAs, and can simultaneously recruit CCR4-NOT and PAN deadenylase complexes (By similarity).</text>
</comment>
<comment type="subunit">
    <text evidence="2">Interacts with AGO2. Interacts with AGO1, AGO3 and AGO4. Interacts with CNOT1; the interaction is direct and mediates the association with the CCR4-NOT complex. Interacts with ZC3H12A. Interacts with SND1. Interacts with GARRE1 (By similarity).</text>
</comment>
<comment type="subcellular location">
    <subcellularLocation>
        <location evidence="2">Cytoplasm</location>
        <location evidence="2">P-body</location>
    </subcellularLocation>
    <text evidence="2">Mammalian P-bodies are also known as GW bodies (GWBs).</text>
</comment>
<comment type="developmental stage">
    <text evidence="4">Detected in the yolk sac endoderm at embryonic stage 9.5 dpc.</text>
</comment>
<comment type="disruption phenotype">
    <text evidence="4">Development up until embryonic stage 9.5 dpc is normal. After this point, mortality rates increase rapidly with less than 5% survival at stage 12.5 dpc. The yolk sac endoderm is abnormally thin with fewer mitotic cells. In addition there are fewer blood islands in the yolk sac, associated with impaired hematopoiesis. Expression of many miRNA-regulated genes in the yolk sac is abnormal, and in particular there is marked derepression of genes involved in regulation of apoptosis and the cell cycle. miRNA biogenesis is not affected.</text>
</comment>
<comment type="similarity">
    <text evidence="5">Belongs to the GW182 family.</text>
</comment>
<reference key="1">
    <citation type="journal article" date="2005" name="Science">
        <title>The transcriptional landscape of the mammalian genome.</title>
        <authorList>
            <person name="Carninci P."/>
            <person name="Kasukawa T."/>
            <person name="Katayama S."/>
            <person name="Gough J."/>
            <person name="Frith M.C."/>
            <person name="Maeda N."/>
            <person name="Oyama R."/>
            <person name="Ravasi T."/>
            <person name="Lenhard B."/>
            <person name="Wells C."/>
            <person name="Kodzius R."/>
            <person name="Shimokawa K."/>
            <person name="Bajic V.B."/>
            <person name="Brenner S.E."/>
            <person name="Batalov S."/>
            <person name="Forrest A.R."/>
            <person name="Zavolan M."/>
            <person name="Davis M.J."/>
            <person name="Wilming L.G."/>
            <person name="Aidinis V."/>
            <person name="Allen J.E."/>
            <person name="Ambesi-Impiombato A."/>
            <person name="Apweiler R."/>
            <person name="Aturaliya R.N."/>
            <person name="Bailey T.L."/>
            <person name="Bansal M."/>
            <person name="Baxter L."/>
            <person name="Beisel K.W."/>
            <person name="Bersano T."/>
            <person name="Bono H."/>
            <person name="Chalk A.M."/>
            <person name="Chiu K.P."/>
            <person name="Choudhary V."/>
            <person name="Christoffels A."/>
            <person name="Clutterbuck D.R."/>
            <person name="Crowe M.L."/>
            <person name="Dalla E."/>
            <person name="Dalrymple B.P."/>
            <person name="de Bono B."/>
            <person name="Della Gatta G."/>
            <person name="di Bernardo D."/>
            <person name="Down T."/>
            <person name="Engstrom P."/>
            <person name="Fagiolini M."/>
            <person name="Faulkner G."/>
            <person name="Fletcher C.F."/>
            <person name="Fukushima T."/>
            <person name="Furuno M."/>
            <person name="Futaki S."/>
            <person name="Gariboldi M."/>
            <person name="Georgii-Hemming P."/>
            <person name="Gingeras T.R."/>
            <person name="Gojobori T."/>
            <person name="Green R.E."/>
            <person name="Gustincich S."/>
            <person name="Harbers M."/>
            <person name="Hayashi Y."/>
            <person name="Hensch T.K."/>
            <person name="Hirokawa N."/>
            <person name="Hill D."/>
            <person name="Huminiecki L."/>
            <person name="Iacono M."/>
            <person name="Ikeo K."/>
            <person name="Iwama A."/>
            <person name="Ishikawa T."/>
            <person name="Jakt M."/>
            <person name="Kanapin A."/>
            <person name="Katoh M."/>
            <person name="Kawasawa Y."/>
            <person name="Kelso J."/>
            <person name="Kitamura H."/>
            <person name="Kitano H."/>
            <person name="Kollias G."/>
            <person name="Krishnan S.P."/>
            <person name="Kruger A."/>
            <person name="Kummerfeld S.K."/>
            <person name="Kurochkin I.V."/>
            <person name="Lareau L.F."/>
            <person name="Lazarevic D."/>
            <person name="Lipovich L."/>
            <person name="Liu J."/>
            <person name="Liuni S."/>
            <person name="McWilliam S."/>
            <person name="Madan Babu M."/>
            <person name="Madera M."/>
            <person name="Marchionni L."/>
            <person name="Matsuda H."/>
            <person name="Matsuzawa S."/>
            <person name="Miki H."/>
            <person name="Mignone F."/>
            <person name="Miyake S."/>
            <person name="Morris K."/>
            <person name="Mottagui-Tabar S."/>
            <person name="Mulder N."/>
            <person name="Nakano N."/>
            <person name="Nakauchi H."/>
            <person name="Ng P."/>
            <person name="Nilsson R."/>
            <person name="Nishiguchi S."/>
            <person name="Nishikawa S."/>
            <person name="Nori F."/>
            <person name="Ohara O."/>
            <person name="Okazaki Y."/>
            <person name="Orlando V."/>
            <person name="Pang K.C."/>
            <person name="Pavan W.J."/>
            <person name="Pavesi G."/>
            <person name="Pesole G."/>
            <person name="Petrovsky N."/>
            <person name="Piazza S."/>
            <person name="Reed J."/>
            <person name="Reid J.F."/>
            <person name="Ring B.Z."/>
            <person name="Ringwald M."/>
            <person name="Rost B."/>
            <person name="Ruan Y."/>
            <person name="Salzberg S.L."/>
            <person name="Sandelin A."/>
            <person name="Schneider C."/>
            <person name="Schoenbach C."/>
            <person name="Sekiguchi K."/>
            <person name="Semple C.A."/>
            <person name="Seno S."/>
            <person name="Sessa L."/>
            <person name="Sheng Y."/>
            <person name="Shibata Y."/>
            <person name="Shimada H."/>
            <person name="Shimada K."/>
            <person name="Silva D."/>
            <person name="Sinclair B."/>
            <person name="Sperling S."/>
            <person name="Stupka E."/>
            <person name="Sugiura K."/>
            <person name="Sultana R."/>
            <person name="Takenaka Y."/>
            <person name="Taki K."/>
            <person name="Tammoja K."/>
            <person name="Tan S.L."/>
            <person name="Tang S."/>
            <person name="Taylor M.S."/>
            <person name="Tegner J."/>
            <person name="Teichmann S.A."/>
            <person name="Ueda H.R."/>
            <person name="van Nimwegen E."/>
            <person name="Verardo R."/>
            <person name="Wei C.L."/>
            <person name="Yagi K."/>
            <person name="Yamanishi H."/>
            <person name="Zabarovsky E."/>
            <person name="Zhu S."/>
            <person name="Zimmer A."/>
            <person name="Hide W."/>
            <person name="Bult C."/>
            <person name="Grimmond S.M."/>
            <person name="Teasdale R.D."/>
            <person name="Liu E.T."/>
            <person name="Brusic V."/>
            <person name="Quackenbush J."/>
            <person name="Wahlestedt C."/>
            <person name="Mattick J.S."/>
            <person name="Hume D.A."/>
            <person name="Kai C."/>
            <person name="Sasaki D."/>
            <person name="Tomaru Y."/>
            <person name="Fukuda S."/>
            <person name="Kanamori-Katayama M."/>
            <person name="Suzuki M."/>
            <person name="Aoki J."/>
            <person name="Arakawa T."/>
            <person name="Iida J."/>
            <person name="Imamura K."/>
            <person name="Itoh M."/>
            <person name="Kato T."/>
            <person name="Kawaji H."/>
            <person name="Kawagashira N."/>
            <person name="Kawashima T."/>
            <person name="Kojima M."/>
            <person name="Kondo S."/>
            <person name="Konno H."/>
            <person name="Nakano K."/>
            <person name="Ninomiya N."/>
            <person name="Nishio T."/>
            <person name="Okada M."/>
            <person name="Plessy C."/>
            <person name="Shibata K."/>
            <person name="Shiraki T."/>
            <person name="Suzuki S."/>
            <person name="Tagami M."/>
            <person name="Waki K."/>
            <person name="Watahiki A."/>
            <person name="Okamura-Oho Y."/>
            <person name="Suzuki H."/>
            <person name="Kawai J."/>
            <person name="Hayashizaki Y."/>
        </authorList>
    </citation>
    <scope>NUCLEOTIDE SEQUENCE [LARGE SCALE MRNA]</scope>
</reference>
<reference key="2">
    <citation type="journal article" date="2009" name="PLoS Biol.">
        <title>Lineage-specific biology revealed by a finished genome assembly of the mouse.</title>
        <authorList>
            <person name="Church D.M."/>
            <person name="Goodstadt L."/>
            <person name="Hillier L.W."/>
            <person name="Zody M.C."/>
            <person name="Goldstein S."/>
            <person name="She X."/>
            <person name="Bult C.J."/>
            <person name="Agarwala R."/>
            <person name="Cherry J.L."/>
            <person name="DiCuccio M."/>
            <person name="Hlavina W."/>
            <person name="Kapustin Y."/>
            <person name="Meric P."/>
            <person name="Maglott D."/>
            <person name="Birtle Z."/>
            <person name="Marques A.C."/>
            <person name="Graves T."/>
            <person name="Zhou S."/>
            <person name="Teague B."/>
            <person name="Potamousis K."/>
            <person name="Churas C."/>
            <person name="Place M."/>
            <person name="Herschleb J."/>
            <person name="Runnheim R."/>
            <person name="Forrest D."/>
            <person name="Amos-Landgraf J."/>
            <person name="Schwartz D.C."/>
            <person name="Cheng Z."/>
            <person name="Lindblad-Toh K."/>
            <person name="Eichler E.E."/>
            <person name="Ponting C.P."/>
        </authorList>
    </citation>
    <scope>NUCLEOTIDE SEQUENCE [LARGE SCALE GENOMIC DNA]</scope>
    <source>
        <strain>C57BL/6J</strain>
    </source>
</reference>
<reference key="3">
    <citation type="journal article" date="2012" name="J. Biol. Chem.">
        <title>Trinucleotide repeat containing 6a (Tnrc6a)-mediated microRNA function is required for development of yolk sac endoderm.</title>
        <authorList>
            <person name="Jiang Z."/>
            <person name="Yu N."/>
            <person name="Kuang P."/>
            <person name="Chen M."/>
            <person name="Shao F."/>
            <person name="Martin G."/>
            <person name="Chui D.H."/>
            <person name="Cardoso W.V."/>
            <person name="Ai X."/>
            <person name="Lue J."/>
        </authorList>
    </citation>
    <scope>FUNCTION</scope>
    <scope>DEVELOPMENTAL STAGE</scope>
    <scope>DISRUPTION PHENOTYPE</scope>
</reference>
<accession>Q3UHK8</accession>
<accession>F6ZMJ4</accession>
<evidence type="ECO:0000250" key="1"/>
<evidence type="ECO:0000250" key="2">
    <source>
        <dbReference type="UniProtKB" id="Q8NDV7"/>
    </source>
</evidence>
<evidence type="ECO:0000256" key="3">
    <source>
        <dbReference type="SAM" id="MobiDB-lite"/>
    </source>
</evidence>
<evidence type="ECO:0000269" key="4">
    <source>
    </source>
</evidence>
<evidence type="ECO:0000305" key="5"/>
<dbReference type="EMBL" id="AK147327">
    <property type="protein sequence ID" value="BAE27849.1"/>
    <property type="molecule type" value="mRNA"/>
</dbReference>
<dbReference type="EMBL" id="AC138364">
    <property type="status" value="NOT_ANNOTATED_CDS"/>
    <property type="molecule type" value="Genomic_DNA"/>
</dbReference>
<dbReference type="EMBL" id="AC141887">
    <property type="status" value="NOT_ANNOTATED_CDS"/>
    <property type="molecule type" value="Genomic_DNA"/>
</dbReference>
<dbReference type="CCDS" id="CCDS57583.1"/>
<dbReference type="RefSeq" id="NP_659174.3">
    <property type="nucleotide sequence ID" value="NM_144925.3"/>
</dbReference>
<dbReference type="PDB" id="5UMZ">
    <property type="method" value="X-ray"/>
    <property type="resolution" value="1.90 A"/>
    <property type="chains" value="D/E=1164-1172"/>
</dbReference>
<dbReference type="PDBsum" id="5UMZ"/>
<dbReference type="SMR" id="Q3UHK8"/>
<dbReference type="BioGRID" id="231455">
    <property type="interactions" value="8"/>
</dbReference>
<dbReference type="DIP" id="DIP-60538N"/>
<dbReference type="FunCoup" id="Q3UHK8">
    <property type="interactions" value="4444"/>
</dbReference>
<dbReference type="IntAct" id="Q3UHK8">
    <property type="interactions" value="3"/>
</dbReference>
<dbReference type="STRING" id="10090.ENSMUSP00000091595"/>
<dbReference type="GlyGen" id="Q3UHK8">
    <property type="glycosylation" value="14 sites, 1 O-linked glycan (12 sites)"/>
</dbReference>
<dbReference type="iPTMnet" id="Q3UHK8"/>
<dbReference type="PhosphoSitePlus" id="Q3UHK8"/>
<dbReference type="jPOST" id="Q3UHK8"/>
<dbReference type="PaxDb" id="10090-ENSMUSP00000091595"/>
<dbReference type="ProteomicsDB" id="258945"/>
<dbReference type="Pumba" id="Q3UHK8"/>
<dbReference type="Antibodypedia" id="12719">
    <property type="antibodies" value="115 antibodies from 23 providers"/>
</dbReference>
<dbReference type="DNASU" id="233833"/>
<dbReference type="Ensembl" id="ENSMUST00000094053.7">
    <property type="protein sequence ID" value="ENSMUSP00000091595.6"/>
    <property type="gene ID" value="ENSMUSG00000052707.9"/>
</dbReference>
<dbReference type="GeneID" id="233833"/>
<dbReference type="KEGG" id="mmu:233833"/>
<dbReference type="AGR" id="MGI:2385292"/>
<dbReference type="CTD" id="27327"/>
<dbReference type="MGI" id="MGI:2385292">
    <property type="gene designation" value="Tnrc6a"/>
</dbReference>
<dbReference type="VEuPathDB" id="HostDB:ENSMUSG00000052707"/>
<dbReference type="eggNOG" id="ENOG502QPQQ">
    <property type="taxonomic scope" value="Eukaryota"/>
</dbReference>
<dbReference type="GeneTree" id="ENSGT00940000158180"/>
<dbReference type="InParanoid" id="Q3UHK8"/>
<dbReference type="OMA" id="ISASDNW"/>
<dbReference type="PhylomeDB" id="Q3UHK8"/>
<dbReference type="TreeFam" id="TF329702"/>
<dbReference type="Reactome" id="R-MMU-426496">
    <property type="pathway name" value="Post-transcriptional silencing by small RNAs"/>
</dbReference>
<dbReference type="Reactome" id="R-MMU-5578749">
    <property type="pathway name" value="Transcriptional regulation by small RNAs"/>
</dbReference>
<dbReference type="BioGRID-ORCS" id="233833">
    <property type="hits" value="1 hit in 77 CRISPR screens"/>
</dbReference>
<dbReference type="ChiTaRS" id="Tnrc6a">
    <property type="organism name" value="mouse"/>
</dbReference>
<dbReference type="PRO" id="PR:Q3UHK8"/>
<dbReference type="Proteomes" id="UP000000589">
    <property type="component" value="Chromosome 7"/>
</dbReference>
<dbReference type="RNAct" id="Q3UHK8">
    <property type="molecule type" value="protein"/>
</dbReference>
<dbReference type="Bgee" id="ENSMUSG00000052707">
    <property type="expression patterns" value="Expressed in ciliary body and 274 other cell types or tissues"/>
</dbReference>
<dbReference type="ExpressionAtlas" id="Q3UHK8">
    <property type="expression patterns" value="baseline and differential"/>
</dbReference>
<dbReference type="GO" id="GO:0005829">
    <property type="term" value="C:cytosol"/>
    <property type="evidence" value="ECO:0000304"/>
    <property type="project" value="Reactome"/>
</dbReference>
<dbReference type="GO" id="GO:0005794">
    <property type="term" value="C:Golgi apparatus"/>
    <property type="evidence" value="ECO:0007669"/>
    <property type="project" value="Ensembl"/>
</dbReference>
<dbReference type="GO" id="GO:0005654">
    <property type="term" value="C:nucleoplasm"/>
    <property type="evidence" value="ECO:0007669"/>
    <property type="project" value="Ensembl"/>
</dbReference>
<dbReference type="GO" id="GO:0000932">
    <property type="term" value="C:P-body"/>
    <property type="evidence" value="ECO:0000250"/>
    <property type="project" value="MGI"/>
</dbReference>
<dbReference type="GO" id="GO:0048471">
    <property type="term" value="C:perinuclear region of cytoplasm"/>
    <property type="evidence" value="ECO:0000250"/>
    <property type="project" value="MGI"/>
</dbReference>
<dbReference type="GO" id="GO:0016442">
    <property type="term" value="C:RISC complex"/>
    <property type="evidence" value="ECO:0000250"/>
    <property type="project" value="UniProtKB"/>
</dbReference>
<dbReference type="GO" id="GO:0060090">
    <property type="term" value="F:molecular adaptor activity"/>
    <property type="evidence" value="ECO:0000250"/>
    <property type="project" value="MGI"/>
</dbReference>
<dbReference type="GO" id="GO:0003723">
    <property type="term" value="F:RNA binding"/>
    <property type="evidence" value="ECO:0007669"/>
    <property type="project" value="UniProtKB-KW"/>
</dbReference>
<dbReference type="GO" id="GO:0009267">
    <property type="term" value="P:cellular response to starvation"/>
    <property type="evidence" value="ECO:0000314"/>
    <property type="project" value="MGI"/>
</dbReference>
<dbReference type="GO" id="GO:0007492">
    <property type="term" value="P:endoderm development"/>
    <property type="evidence" value="ECO:0000315"/>
    <property type="project" value="MGI"/>
</dbReference>
<dbReference type="GO" id="GO:0032507">
    <property type="term" value="P:maintenance of protein location in cell"/>
    <property type="evidence" value="ECO:0000250"/>
    <property type="project" value="MGI"/>
</dbReference>
<dbReference type="GO" id="GO:0035278">
    <property type="term" value="P:miRNA-mediated gene silencing by inhibition of translation"/>
    <property type="evidence" value="ECO:0000250"/>
    <property type="project" value="UniProtKB"/>
</dbReference>
<dbReference type="GO" id="GO:0033962">
    <property type="term" value="P:P-body assembly"/>
    <property type="evidence" value="ECO:0007669"/>
    <property type="project" value="Ensembl"/>
</dbReference>
<dbReference type="GO" id="GO:1900153">
    <property type="term" value="P:positive regulation of nuclear-transcribed mRNA catabolic process, deadenylation-dependent decay"/>
    <property type="evidence" value="ECO:0000250"/>
    <property type="project" value="UniProtKB"/>
</dbReference>
<dbReference type="GO" id="GO:0060213">
    <property type="term" value="P:positive regulation of nuclear-transcribed mRNA poly(A) tail shortening"/>
    <property type="evidence" value="ECO:0000250"/>
    <property type="project" value="UniProtKB"/>
</dbReference>
<dbReference type="GO" id="GO:0031047">
    <property type="term" value="P:regulatory ncRNA-mediated gene silencing"/>
    <property type="evidence" value="ECO:0000250"/>
    <property type="project" value="UniProtKB"/>
</dbReference>
<dbReference type="CDD" id="cd12711">
    <property type="entry name" value="RRM_TNRC6A"/>
    <property type="match status" value="1"/>
</dbReference>
<dbReference type="FunFam" id="3.30.70.330:FF:000011">
    <property type="entry name" value="trinucleotide repeat-containing gene 6A protein-like"/>
    <property type="match status" value="1"/>
</dbReference>
<dbReference type="Gene3D" id="3.30.70.330">
    <property type="match status" value="1"/>
</dbReference>
<dbReference type="InterPro" id="IPR019486">
    <property type="entry name" value="Argonaute_hook_dom"/>
</dbReference>
<dbReference type="InterPro" id="IPR052068">
    <property type="entry name" value="GW182_domain"/>
</dbReference>
<dbReference type="InterPro" id="IPR012677">
    <property type="entry name" value="Nucleotide-bd_a/b_plait_sf"/>
</dbReference>
<dbReference type="InterPro" id="IPR035979">
    <property type="entry name" value="RBD_domain_sf"/>
</dbReference>
<dbReference type="InterPro" id="IPR032226">
    <property type="entry name" value="TNRC6_PABC-bd"/>
</dbReference>
<dbReference type="InterPro" id="IPR034924">
    <property type="entry name" value="TNRC6A_RRM"/>
</dbReference>
<dbReference type="PANTHER" id="PTHR13020">
    <property type="entry name" value="TRINUCLEOTIDE REPEAT-CONTAINING GENE 6"/>
    <property type="match status" value="1"/>
</dbReference>
<dbReference type="PANTHER" id="PTHR13020:SF28">
    <property type="entry name" value="TRINUCLEOTIDE REPEAT-CONTAINING GENE 6A PROTEIN"/>
    <property type="match status" value="1"/>
</dbReference>
<dbReference type="Pfam" id="PF10427">
    <property type="entry name" value="Ago_hook"/>
    <property type="match status" value="1"/>
</dbReference>
<dbReference type="Pfam" id="PF16608">
    <property type="entry name" value="TNRC6-PABC_bdg"/>
    <property type="match status" value="1"/>
</dbReference>
<dbReference type="SUPFAM" id="SSF54928">
    <property type="entry name" value="RNA-binding domain, RBD"/>
    <property type="match status" value="1"/>
</dbReference>
<proteinExistence type="evidence at protein level"/>
<keyword id="KW-0002">3D-structure</keyword>
<keyword id="KW-0963">Cytoplasm</keyword>
<keyword id="KW-0597">Phosphoprotein</keyword>
<keyword id="KW-1185">Reference proteome</keyword>
<keyword id="KW-0694">RNA-binding</keyword>
<keyword id="KW-0943">RNA-mediated gene silencing</keyword>
<keyword id="KW-0810">Translation regulation</keyword>